<organism>
    <name type="scientific">Cupriavidus pinatubonensis (strain JMP 134 / LMG 1197)</name>
    <name type="common">Cupriavidus necator (strain JMP 134)</name>
    <dbReference type="NCBI Taxonomy" id="264198"/>
    <lineage>
        <taxon>Bacteria</taxon>
        <taxon>Pseudomonadati</taxon>
        <taxon>Pseudomonadota</taxon>
        <taxon>Betaproteobacteria</taxon>
        <taxon>Burkholderiales</taxon>
        <taxon>Burkholderiaceae</taxon>
        <taxon>Cupriavidus</taxon>
    </lineage>
</organism>
<gene>
    <name evidence="1" type="primary">ubiG</name>
    <name type="ordered locus">Reut_A2580</name>
</gene>
<proteinExistence type="inferred from homology"/>
<keyword id="KW-0489">Methyltransferase</keyword>
<keyword id="KW-0949">S-adenosyl-L-methionine</keyword>
<keyword id="KW-0808">Transferase</keyword>
<keyword id="KW-0831">Ubiquinone biosynthesis</keyword>
<accession>Q46Y42</accession>
<evidence type="ECO:0000255" key="1">
    <source>
        <dbReference type="HAMAP-Rule" id="MF_00472"/>
    </source>
</evidence>
<evidence type="ECO:0000256" key="2">
    <source>
        <dbReference type="SAM" id="MobiDB-lite"/>
    </source>
</evidence>
<dbReference type="EC" id="2.1.1.222" evidence="1"/>
<dbReference type="EC" id="2.1.1.64" evidence="1"/>
<dbReference type="EMBL" id="CP000090">
    <property type="protein sequence ID" value="AAZ61941.1"/>
    <property type="molecule type" value="Genomic_DNA"/>
</dbReference>
<dbReference type="SMR" id="Q46Y42"/>
<dbReference type="STRING" id="264198.Reut_A2580"/>
<dbReference type="DNASU" id="3609604"/>
<dbReference type="KEGG" id="reu:Reut_A2580"/>
<dbReference type="eggNOG" id="COG2227">
    <property type="taxonomic scope" value="Bacteria"/>
</dbReference>
<dbReference type="HOGENOM" id="CLU_042432_5_0_4"/>
<dbReference type="OrthoDB" id="9801538at2"/>
<dbReference type="UniPathway" id="UPA00232"/>
<dbReference type="GO" id="GO:0102208">
    <property type="term" value="F:2-polyprenyl-6-hydroxyphenol methylase activity"/>
    <property type="evidence" value="ECO:0007669"/>
    <property type="project" value="UniProtKB-EC"/>
</dbReference>
<dbReference type="GO" id="GO:0061542">
    <property type="term" value="F:3-demethylubiquinol 3-O-methyltransferase activity"/>
    <property type="evidence" value="ECO:0007669"/>
    <property type="project" value="UniProtKB-UniRule"/>
</dbReference>
<dbReference type="GO" id="GO:0010420">
    <property type="term" value="F:polyprenyldihydroxybenzoate methyltransferase activity"/>
    <property type="evidence" value="ECO:0007669"/>
    <property type="project" value="InterPro"/>
</dbReference>
<dbReference type="GO" id="GO:0032259">
    <property type="term" value="P:methylation"/>
    <property type="evidence" value="ECO:0007669"/>
    <property type="project" value="UniProtKB-KW"/>
</dbReference>
<dbReference type="CDD" id="cd02440">
    <property type="entry name" value="AdoMet_MTases"/>
    <property type="match status" value="1"/>
</dbReference>
<dbReference type="FunFam" id="3.40.50.150:FF:000028">
    <property type="entry name" value="Ubiquinone biosynthesis O-methyltransferase"/>
    <property type="match status" value="1"/>
</dbReference>
<dbReference type="Gene3D" id="3.40.50.150">
    <property type="entry name" value="Vaccinia Virus protein VP39"/>
    <property type="match status" value="1"/>
</dbReference>
<dbReference type="HAMAP" id="MF_00472">
    <property type="entry name" value="UbiG"/>
    <property type="match status" value="1"/>
</dbReference>
<dbReference type="InterPro" id="IPR029063">
    <property type="entry name" value="SAM-dependent_MTases_sf"/>
</dbReference>
<dbReference type="InterPro" id="IPR010233">
    <property type="entry name" value="UbiG_MeTrfase"/>
</dbReference>
<dbReference type="NCBIfam" id="TIGR01983">
    <property type="entry name" value="UbiG"/>
    <property type="match status" value="1"/>
</dbReference>
<dbReference type="PANTHER" id="PTHR43464">
    <property type="entry name" value="METHYLTRANSFERASE"/>
    <property type="match status" value="1"/>
</dbReference>
<dbReference type="PANTHER" id="PTHR43464:SF19">
    <property type="entry name" value="UBIQUINONE BIOSYNTHESIS O-METHYLTRANSFERASE, MITOCHONDRIAL"/>
    <property type="match status" value="1"/>
</dbReference>
<dbReference type="Pfam" id="PF13489">
    <property type="entry name" value="Methyltransf_23"/>
    <property type="match status" value="1"/>
</dbReference>
<dbReference type="SUPFAM" id="SSF53335">
    <property type="entry name" value="S-adenosyl-L-methionine-dependent methyltransferases"/>
    <property type="match status" value="1"/>
</dbReference>
<comment type="function">
    <text evidence="1">O-methyltransferase that catalyzes the 2 O-methylation steps in the ubiquinone biosynthetic pathway.</text>
</comment>
<comment type="catalytic activity">
    <reaction evidence="1">
        <text>a 3-demethylubiquinol + S-adenosyl-L-methionine = a ubiquinol + S-adenosyl-L-homocysteine + H(+)</text>
        <dbReference type="Rhea" id="RHEA:44380"/>
        <dbReference type="Rhea" id="RHEA-COMP:9566"/>
        <dbReference type="Rhea" id="RHEA-COMP:10914"/>
        <dbReference type="ChEBI" id="CHEBI:15378"/>
        <dbReference type="ChEBI" id="CHEBI:17976"/>
        <dbReference type="ChEBI" id="CHEBI:57856"/>
        <dbReference type="ChEBI" id="CHEBI:59789"/>
        <dbReference type="ChEBI" id="CHEBI:84422"/>
        <dbReference type="EC" id="2.1.1.64"/>
    </reaction>
</comment>
<comment type="catalytic activity">
    <reaction evidence="1">
        <text>a 3-(all-trans-polyprenyl)benzene-1,2-diol + S-adenosyl-L-methionine = a 2-methoxy-6-(all-trans-polyprenyl)phenol + S-adenosyl-L-homocysteine + H(+)</text>
        <dbReference type="Rhea" id="RHEA:31411"/>
        <dbReference type="Rhea" id="RHEA-COMP:9550"/>
        <dbReference type="Rhea" id="RHEA-COMP:9551"/>
        <dbReference type="ChEBI" id="CHEBI:15378"/>
        <dbReference type="ChEBI" id="CHEBI:57856"/>
        <dbReference type="ChEBI" id="CHEBI:59789"/>
        <dbReference type="ChEBI" id="CHEBI:62729"/>
        <dbReference type="ChEBI" id="CHEBI:62731"/>
        <dbReference type="EC" id="2.1.1.222"/>
    </reaction>
</comment>
<comment type="pathway">
    <text evidence="1">Cofactor biosynthesis; ubiquinone biosynthesis.</text>
</comment>
<comment type="similarity">
    <text evidence="1">Belongs to the methyltransferase superfamily. UbiG/COQ3 family.</text>
</comment>
<sequence>MTSPSQVLPASAGKPTGPNADPKEIDKFSELAHHWWDPNSEFKPLHDLNPLRLGWIDGIAGLAGKKVVDIGCGGGILSESMARLGANVRGIDLSTKALRVADLHSLESGVAVNYEEIAAEALAAREPGSVDVVTCMEMLEHVPDPESIVQACATLVRPGGHVFVSTINRNLKAYLMAVVGAEYILQMLPRGTHDYEKFITPSEMARFARNAGLDLVEMRGMTYNPLSQIYSLSRDTDVNYMMAFRRVAE</sequence>
<protein>
    <recommendedName>
        <fullName evidence="1">Ubiquinone biosynthesis O-methyltransferase</fullName>
    </recommendedName>
    <alternativeName>
        <fullName evidence="1">2-polyprenyl-6-hydroxyphenol methylase</fullName>
        <ecNumber evidence="1">2.1.1.222</ecNumber>
    </alternativeName>
    <alternativeName>
        <fullName evidence="1">3-demethylubiquinone 3-O-methyltransferase</fullName>
        <ecNumber evidence="1">2.1.1.64</ecNumber>
    </alternativeName>
</protein>
<name>UBIG_CUPPJ</name>
<feature type="chain" id="PRO_0000241724" description="Ubiquinone biosynthesis O-methyltransferase">
    <location>
        <begin position="1"/>
        <end position="249"/>
    </location>
</feature>
<feature type="region of interest" description="Disordered" evidence="2">
    <location>
        <begin position="1"/>
        <end position="23"/>
    </location>
</feature>
<feature type="binding site" evidence="1">
    <location>
        <position position="52"/>
    </location>
    <ligand>
        <name>S-adenosyl-L-methionine</name>
        <dbReference type="ChEBI" id="CHEBI:59789"/>
    </ligand>
</feature>
<feature type="binding site" evidence="1">
    <location>
        <position position="71"/>
    </location>
    <ligand>
        <name>S-adenosyl-L-methionine</name>
        <dbReference type="ChEBI" id="CHEBI:59789"/>
    </ligand>
</feature>
<feature type="binding site" evidence="1">
    <location>
        <position position="92"/>
    </location>
    <ligand>
        <name>S-adenosyl-L-methionine</name>
        <dbReference type="ChEBI" id="CHEBI:59789"/>
    </ligand>
</feature>
<feature type="binding site" evidence="1">
    <location>
        <position position="136"/>
    </location>
    <ligand>
        <name>S-adenosyl-L-methionine</name>
        <dbReference type="ChEBI" id="CHEBI:59789"/>
    </ligand>
</feature>
<reference key="1">
    <citation type="journal article" date="2010" name="PLoS ONE">
        <title>The complete multipartite genome sequence of Cupriavidus necator JMP134, a versatile pollutant degrader.</title>
        <authorList>
            <person name="Lykidis A."/>
            <person name="Perez-Pantoja D."/>
            <person name="Ledger T."/>
            <person name="Mavromatis K."/>
            <person name="Anderson I.J."/>
            <person name="Ivanova N.N."/>
            <person name="Hooper S.D."/>
            <person name="Lapidus A."/>
            <person name="Lucas S."/>
            <person name="Gonzalez B."/>
            <person name="Kyrpides N.C."/>
        </authorList>
    </citation>
    <scope>NUCLEOTIDE SEQUENCE [LARGE SCALE GENOMIC DNA]</scope>
    <source>
        <strain>JMP134 / LMG 1197</strain>
    </source>
</reference>